<proteinExistence type="inferred from homology"/>
<organism>
    <name type="scientific">Proteus mirabilis (strain HI4320)</name>
    <dbReference type="NCBI Taxonomy" id="529507"/>
    <lineage>
        <taxon>Bacteria</taxon>
        <taxon>Pseudomonadati</taxon>
        <taxon>Pseudomonadota</taxon>
        <taxon>Gammaproteobacteria</taxon>
        <taxon>Enterobacterales</taxon>
        <taxon>Morganellaceae</taxon>
        <taxon>Proteus</taxon>
    </lineage>
</organism>
<protein>
    <recommendedName>
        <fullName evidence="1">Large ribosomal subunit protein uL15</fullName>
    </recommendedName>
    <alternativeName>
        <fullName evidence="3">50S ribosomal protein L15</fullName>
    </alternativeName>
</protein>
<dbReference type="EMBL" id="AM942759">
    <property type="protein sequence ID" value="CAR46419.1"/>
    <property type="molecule type" value="Genomic_DNA"/>
</dbReference>
<dbReference type="RefSeq" id="WP_004246944.1">
    <property type="nucleotide sequence ID" value="NC_010554.1"/>
</dbReference>
<dbReference type="SMR" id="B4F1K3"/>
<dbReference type="EnsemblBacteria" id="CAR46419">
    <property type="protein sequence ID" value="CAR46419"/>
    <property type="gene ID" value="PMI3274"/>
</dbReference>
<dbReference type="GeneID" id="84585509"/>
<dbReference type="KEGG" id="pmr:PMI3274"/>
<dbReference type="eggNOG" id="COG0200">
    <property type="taxonomic scope" value="Bacteria"/>
</dbReference>
<dbReference type="HOGENOM" id="CLU_055188_4_2_6"/>
<dbReference type="Proteomes" id="UP000008319">
    <property type="component" value="Chromosome"/>
</dbReference>
<dbReference type="GO" id="GO:0022625">
    <property type="term" value="C:cytosolic large ribosomal subunit"/>
    <property type="evidence" value="ECO:0007669"/>
    <property type="project" value="TreeGrafter"/>
</dbReference>
<dbReference type="GO" id="GO:0019843">
    <property type="term" value="F:rRNA binding"/>
    <property type="evidence" value="ECO:0007669"/>
    <property type="project" value="UniProtKB-UniRule"/>
</dbReference>
<dbReference type="GO" id="GO:0003735">
    <property type="term" value="F:structural constituent of ribosome"/>
    <property type="evidence" value="ECO:0007669"/>
    <property type="project" value="InterPro"/>
</dbReference>
<dbReference type="GO" id="GO:0006412">
    <property type="term" value="P:translation"/>
    <property type="evidence" value="ECO:0007669"/>
    <property type="project" value="UniProtKB-UniRule"/>
</dbReference>
<dbReference type="FunFam" id="3.100.10.10:FF:000003">
    <property type="entry name" value="50S ribosomal protein L15"/>
    <property type="match status" value="1"/>
</dbReference>
<dbReference type="Gene3D" id="3.100.10.10">
    <property type="match status" value="1"/>
</dbReference>
<dbReference type="HAMAP" id="MF_01341">
    <property type="entry name" value="Ribosomal_uL15"/>
    <property type="match status" value="1"/>
</dbReference>
<dbReference type="InterPro" id="IPR030878">
    <property type="entry name" value="Ribosomal_uL15"/>
</dbReference>
<dbReference type="InterPro" id="IPR021131">
    <property type="entry name" value="Ribosomal_uL15/eL18"/>
</dbReference>
<dbReference type="InterPro" id="IPR036227">
    <property type="entry name" value="Ribosomal_uL15/eL18_sf"/>
</dbReference>
<dbReference type="InterPro" id="IPR005749">
    <property type="entry name" value="Ribosomal_uL15_bac-type"/>
</dbReference>
<dbReference type="InterPro" id="IPR001196">
    <property type="entry name" value="Ribosomal_uL15_CS"/>
</dbReference>
<dbReference type="NCBIfam" id="TIGR01071">
    <property type="entry name" value="rplO_bact"/>
    <property type="match status" value="1"/>
</dbReference>
<dbReference type="PANTHER" id="PTHR12934">
    <property type="entry name" value="50S RIBOSOMAL PROTEIN L15"/>
    <property type="match status" value="1"/>
</dbReference>
<dbReference type="PANTHER" id="PTHR12934:SF11">
    <property type="entry name" value="LARGE RIBOSOMAL SUBUNIT PROTEIN UL15M"/>
    <property type="match status" value="1"/>
</dbReference>
<dbReference type="Pfam" id="PF00828">
    <property type="entry name" value="Ribosomal_L27A"/>
    <property type="match status" value="1"/>
</dbReference>
<dbReference type="SUPFAM" id="SSF52080">
    <property type="entry name" value="Ribosomal proteins L15p and L18e"/>
    <property type="match status" value="1"/>
</dbReference>
<dbReference type="PROSITE" id="PS00475">
    <property type="entry name" value="RIBOSOMAL_L15"/>
    <property type="match status" value="1"/>
</dbReference>
<keyword id="KW-1185">Reference proteome</keyword>
<keyword id="KW-0687">Ribonucleoprotein</keyword>
<keyword id="KW-0689">Ribosomal protein</keyword>
<keyword id="KW-0694">RNA-binding</keyword>
<keyword id="KW-0699">rRNA-binding</keyword>
<gene>
    <name evidence="1" type="primary">rplO</name>
    <name type="ordered locus">PMI3274</name>
</gene>
<feature type="chain" id="PRO_1000142861" description="Large ribosomal subunit protein uL15">
    <location>
        <begin position="1"/>
        <end position="144"/>
    </location>
</feature>
<feature type="region of interest" description="Disordered" evidence="2">
    <location>
        <begin position="1"/>
        <end position="53"/>
    </location>
</feature>
<feature type="compositionally biased region" description="Gly residues" evidence="2">
    <location>
        <begin position="21"/>
        <end position="31"/>
    </location>
</feature>
<name>RL15_PROMH</name>
<reference key="1">
    <citation type="journal article" date="2008" name="J. Bacteriol.">
        <title>Complete genome sequence of uropathogenic Proteus mirabilis, a master of both adherence and motility.</title>
        <authorList>
            <person name="Pearson M.M."/>
            <person name="Sebaihia M."/>
            <person name="Churcher C."/>
            <person name="Quail M.A."/>
            <person name="Seshasayee A.S."/>
            <person name="Luscombe N.M."/>
            <person name="Abdellah Z."/>
            <person name="Arrosmith C."/>
            <person name="Atkin B."/>
            <person name="Chillingworth T."/>
            <person name="Hauser H."/>
            <person name="Jagels K."/>
            <person name="Moule S."/>
            <person name="Mungall K."/>
            <person name="Norbertczak H."/>
            <person name="Rabbinowitsch E."/>
            <person name="Walker D."/>
            <person name="Whithead S."/>
            <person name="Thomson N.R."/>
            <person name="Rather P.N."/>
            <person name="Parkhill J."/>
            <person name="Mobley H.L.T."/>
        </authorList>
    </citation>
    <scope>NUCLEOTIDE SEQUENCE [LARGE SCALE GENOMIC DNA]</scope>
    <source>
        <strain>HI4320</strain>
    </source>
</reference>
<accession>B4F1K3</accession>
<comment type="function">
    <text evidence="1">Binds to the 23S rRNA.</text>
</comment>
<comment type="subunit">
    <text evidence="1">Part of the 50S ribosomal subunit.</text>
</comment>
<comment type="similarity">
    <text evidence="1">Belongs to the universal ribosomal protein uL15 family.</text>
</comment>
<sequence>MRLNTLSPAEGAKHAPKRVGRGIGSGLGKTGGRGHKGQKSRSGGGVRRGFEGGQMPLYRRLPKFGFTSRKSFVTAEIRLSDLAYVEGDVIDLNALKAANVVGPQIEFAKLILSGEVNRAVTIRGLRVTKGARAAIESAGGKIEE</sequence>
<evidence type="ECO:0000255" key="1">
    <source>
        <dbReference type="HAMAP-Rule" id="MF_01341"/>
    </source>
</evidence>
<evidence type="ECO:0000256" key="2">
    <source>
        <dbReference type="SAM" id="MobiDB-lite"/>
    </source>
</evidence>
<evidence type="ECO:0000305" key="3"/>